<organism>
    <name type="scientific">Cupriavidus pinatubonensis (strain JMP 134 / LMG 1197)</name>
    <name type="common">Cupriavidus necator (strain JMP 134)</name>
    <dbReference type="NCBI Taxonomy" id="264198"/>
    <lineage>
        <taxon>Bacteria</taxon>
        <taxon>Pseudomonadati</taxon>
        <taxon>Pseudomonadota</taxon>
        <taxon>Betaproteobacteria</taxon>
        <taxon>Burkholderiales</taxon>
        <taxon>Burkholderiaceae</taxon>
        <taxon>Cupriavidus</taxon>
    </lineage>
</organism>
<accession>Q46Z22</accession>
<name>ACPS_CUPPJ</name>
<feature type="chain" id="PRO_0000228298" description="Holo-[acyl-carrier-protein] synthase">
    <location>
        <begin position="1"/>
        <end position="140"/>
    </location>
</feature>
<feature type="binding site" evidence="1">
    <location>
        <position position="8"/>
    </location>
    <ligand>
        <name>Mg(2+)</name>
        <dbReference type="ChEBI" id="CHEBI:18420"/>
    </ligand>
</feature>
<feature type="binding site" evidence="1">
    <location>
        <position position="62"/>
    </location>
    <ligand>
        <name>Mg(2+)</name>
        <dbReference type="ChEBI" id="CHEBI:18420"/>
    </ligand>
</feature>
<keyword id="KW-0963">Cytoplasm</keyword>
<keyword id="KW-0275">Fatty acid biosynthesis</keyword>
<keyword id="KW-0276">Fatty acid metabolism</keyword>
<keyword id="KW-0444">Lipid biosynthesis</keyword>
<keyword id="KW-0443">Lipid metabolism</keyword>
<keyword id="KW-0460">Magnesium</keyword>
<keyword id="KW-0479">Metal-binding</keyword>
<keyword id="KW-0808">Transferase</keyword>
<reference key="1">
    <citation type="journal article" date="2010" name="PLoS ONE">
        <title>The complete multipartite genome sequence of Cupriavidus necator JMP134, a versatile pollutant degrader.</title>
        <authorList>
            <person name="Lykidis A."/>
            <person name="Perez-Pantoja D."/>
            <person name="Ledger T."/>
            <person name="Mavromatis K."/>
            <person name="Anderson I.J."/>
            <person name="Ivanova N.N."/>
            <person name="Hooper S.D."/>
            <person name="Lapidus A."/>
            <person name="Lucas S."/>
            <person name="Gonzalez B."/>
            <person name="Kyrpides N.C."/>
        </authorList>
    </citation>
    <scope>NUCLEOTIDE SEQUENCE [LARGE SCALE GENOMIC DNA]</scope>
    <source>
        <strain>JMP134 / LMG 1197</strain>
    </source>
</reference>
<gene>
    <name evidence="1" type="primary">acpS</name>
    <name type="ordered locus">Reut_A2248</name>
</gene>
<evidence type="ECO:0000255" key="1">
    <source>
        <dbReference type="HAMAP-Rule" id="MF_00101"/>
    </source>
</evidence>
<protein>
    <recommendedName>
        <fullName evidence="1">Holo-[acyl-carrier-protein] synthase</fullName>
        <shortName evidence="1">Holo-ACP synthase</shortName>
        <ecNumber evidence="1">2.7.8.7</ecNumber>
    </recommendedName>
    <alternativeName>
        <fullName evidence="1">4'-phosphopantetheinyl transferase AcpS</fullName>
    </alternativeName>
</protein>
<sequence>MIYGVGTDIIEIARVQGVMERTRGRFAEKVLGADELAKYHARKARSERRGLAFLATRFAAKEAFSKAIGLGMRWPMTWRAMELMNLPSGEPTPICHGELAQWIAERGITVRVSVSDERDYAVAFAIAERGGHAAVPENPA</sequence>
<dbReference type="EC" id="2.7.8.7" evidence="1"/>
<dbReference type="EMBL" id="CP000090">
    <property type="protein sequence ID" value="AAZ61611.1"/>
    <property type="molecule type" value="Genomic_DNA"/>
</dbReference>
<dbReference type="SMR" id="Q46Z22"/>
<dbReference type="STRING" id="264198.Reut_A2248"/>
<dbReference type="KEGG" id="reu:Reut_A2248"/>
<dbReference type="eggNOG" id="COG0736">
    <property type="taxonomic scope" value="Bacteria"/>
</dbReference>
<dbReference type="HOGENOM" id="CLU_089696_3_1_4"/>
<dbReference type="OrthoDB" id="517356at2"/>
<dbReference type="GO" id="GO:0005737">
    <property type="term" value="C:cytoplasm"/>
    <property type="evidence" value="ECO:0007669"/>
    <property type="project" value="UniProtKB-SubCell"/>
</dbReference>
<dbReference type="GO" id="GO:0008897">
    <property type="term" value="F:holo-[acyl-carrier-protein] synthase activity"/>
    <property type="evidence" value="ECO:0007669"/>
    <property type="project" value="UniProtKB-UniRule"/>
</dbReference>
<dbReference type="GO" id="GO:0000287">
    <property type="term" value="F:magnesium ion binding"/>
    <property type="evidence" value="ECO:0007669"/>
    <property type="project" value="UniProtKB-UniRule"/>
</dbReference>
<dbReference type="GO" id="GO:0006633">
    <property type="term" value="P:fatty acid biosynthetic process"/>
    <property type="evidence" value="ECO:0007669"/>
    <property type="project" value="UniProtKB-UniRule"/>
</dbReference>
<dbReference type="Gene3D" id="3.90.470.20">
    <property type="entry name" value="4'-phosphopantetheinyl transferase domain"/>
    <property type="match status" value="1"/>
</dbReference>
<dbReference type="HAMAP" id="MF_00101">
    <property type="entry name" value="AcpS"/>
    <property type="match status" value="1"/>
</dbReference>
<dbReference type="InterPro" id="IPR008278">
    <property type="entry name" value="4-PPantetheinyl_Trfase_dom"/>
</dbReference>
<dbReference type="InterPro" id="IPR037143">
    <property type="entry name" value="4-PPantetheinyl_Trfase_dom_sf"/>
</dbReference>
<dbReference type="InterPro" id="IPR002582">
    <property type="entry name" value="ACPS"/>
</dbReference>
<dbReference type="InterPro" id="IPR004568">
    <property type="entry name" value="Ppantetheine-prot_Trfase_dom"/>
</dbReference>
<dbReference type="NCBIfam" id="TIGR00516">
    <property type="entry name" value="acpS"/>
    <property type="match status" value="1"/>
</dbReference>
<dbReference type="NCBIfam" id="TIGR00556">
    <property type="entry name" value="pantethn_trn"/>
    <property type="match status" value="1"/>
</dbReference>
<dbReference type="Pfam" id="PF01648">
    <property type="entry name" value="ACPS"/>
    <property type="match status" value="1"/>
</dbReference>
<dbReference type="SUPFAM" id="SSF56214">
    <property type="entry name" value="4'-phosphopantetheinyl transferase"/>
    <property type="match status" value="1"/>
</dbReference>
<proteinExistence type="inferred from homology"/>
<comment type="function">
    <text evidence="1">Transfers the 4'-phosphopantetheine moiety from coenzyme A to a Ser of acyl-carrier-protein.</text>
</comment>
<comment type="catalytic activity">
    <reaction evidence="1">
        <text>apo-[ACP] + CoA = holo-[ACP] + adenosine 3',5'-bisphosphate + H(+)</text>
        <dbReference type="Rhea" id="RHEA:12068"/>
        <dbReference type="Rhea" id="RHEA-COMP:9685"/>
        <dbReference type="Rhea" id="RHEA-COMP:9690"/>
        <dbReference type="ChEBI" id="CHEBI:15378"/>
        <dbReference type="ChEBI" id="CHEBI:29999"/>
        <dbReference type="ChEBI" id="CHEBI:57287"/>
        <dbReference type="ChEBI" id="CHEBI:58343"/>
        <dbReference type="ChEBI" id="CHEBI:64479"/>
        <dbReference type="EC" id="2.7.8.7"/>
    </reaction>
</comment>
<comment type="cofactor">
    <cofactor evidence="1">
        <name>Mg(2+)</name>
        <dbReference type="ChEBI" id="CHEBI:18420"/>
    </cofactor>
</comment>
<comment type="subcellular location">
    <subcellularLocation>
        <location evidence="1">Cytoplasm</location>
    </subcellularLocation>
</comment>
<comment type="similarity">
    <text evidence="1">Belongs to the P-Pant transferase superfamily. AcpS family.</text>
</comment>